<comment type="function">
    <text evidence="1">Probably catalyzes the deacetylation of acetylated carbohydrates an important step in the degradation of oligosaccharides.</text>
</comment>
<comment type="cofactor">
    <cofactor evidence="1">
        <name>Mg(2+)</name>
        <dbReference type="ChEBI" id="CHEBI:18420"/>
    </cofactor>
</comment>
<comment type="subunit">
    <text evidence="1">Homodimer.</text>
</comment>
<comment type="similarity">
    <text evidence="1">Belongs to the YdjC deacetylase family.</text>
</comment>
<gene>
    <name type="ordered locus">Teth39_1947</name>
</gene>
<dbReference type="EC" id="3.5.1.-" evidence="1"/>
<dbReference type="EMBL" id="CP000924">
    <property type="protein sequence ID" value="ABY95578.1"/>
    <property type="molecule type" value="Genomic_DNA"/>
</dbReference>
<dbReference type="RefSeq" id="WP_012269676.1">
    <property type="nucleotide sequence ID" value="NC_010321.1"/>
</dbReference>
<dbReference type="SMR" id="B0KCX1"/>
<dbReference type="STRING" id="340099.Teth39_1947"/>
<dbReference type="KEGG" id="tpd:Teth39_1947"/>
<dbReference type="eggNOG" id="COG3394">
    <property type="taxonomic scope" value="Bacteria"/>
</dbReference>
<dbReference type="HOGENOM" id="CLU_064244_4_0_9"/>
<dbReference type="Proteomes" id="UP000002156">
    <property type="component" value="Chromosome"/>
</dbReference>
<dbReference type="GO" id="GO:0019213">
    <property type="term" value="F:deacetylase activity"/>
    <property type="evidence" value="ECO:0007669"/>
    <property type="project" value="TreeGrafter"/>
</dbReference>
<dbReference type="GO" id="GO:0016811">
    <property type="term" value="F:hydrolase activity, acting on carbon-nitrogen (but not peptide) bonds, in linear amides"/>
    <property type="evidence" value="ECO:0007669"/>
    <property type="project" value="UniProtKB-UniRule"/>
</dbReference>
<dbReference type="GO" id="GO:0046872">
    <property type="term" value="F:metal ion binding"/>
    <property type="evidence" value="ECO:0007669"/>
    <property type="project" value="UniProtKB-KW"/>
</dbReference>
<dbReference type="GO" id="GO:0000272">
    <property type="term" value="P:polysaccharide catabolic process"/>
    <property type="evidence" value="ECO:0007669"/>
    <property type="project" value="InterPro"/>
</dbReference>
<dbReference type="CDD" id="cd10803">
    <property type="entry name" value="YdjC_EF3048_like"/>
    <property type="match status" value="1"/>
</dbReference>
<dbReference type="Gene3D" id="3.20.20.370">
    <property type="entry name" value="Glycoside hydrolase/deacetylase"/>
    <property type="match status" value="1"/>
</dbReference>
<dbReference type="HAMAP" id="MF_01246">
    <property type="entry name" value="COD"/>
    <property type="match status" value="1"/>
</dbReference>
<dbReference type="InterPro" id="IPR022948">
    <property type="entry name" value="COD_ChbG_bac"/>
</dbReference>
<dbReference type="InterPro" id="IPR011330">
    <property type="entry name" value="Glyco_hydro/deAcase_b/a-brl"/>
</dbReference>
<dbReference type="InterPro" id="IPR006879">
    <property type="entry name" value="YdjC-like"/>
</dbReference>
<dbReference type="PANTHER" id="PTHR31609:SF1">
    <property type="entry name" value="CARBOHYDRATE DEACETYLASE"/>
    <property type="match status" value="1"/>
</dbReference>
<dbReference type="PANTHER" id="PTHR31609">
    <property type="entry name" value="YDJC DEACETYLASE FAMILY MEMBER"/>
    <property type="match status" value="1"/>
</dbReference>
<dbReference type="Pfam" id="PF04794">
    <property type="entry name" value="YdjC"/>
    <property type="match status" value="1"/>
</dbReference>
<dbReference type="SUPFAM" id="SSF88713">
    <property type="entry name" value="Glycoside hydrolase/deacetylase"/>
    <property type="match status" value="1"/>
</dbReference>
<organism>
    <name type="scientific">Thermoanaerobacter pseudethanolicus (strain ATCC 33223 / 39E)</name>
    <name type="common">Clostridium thermohydrosulfuricum</name>
    <dbReference type="NCBI Taxonomy" id="340099"/>
    <lineage>
        <taxon>Bacteria</taxon>
        <taxon>Bacillati</taxon>
        <taxon>Bacillota</taxon>
        <taxon>Clostridia</taxon>
        <taxon>Thermoanaerobacterales</taxon>
        <taxon>Thermoanaerobacteraceae</taxon>
        <taxon>Thermoanaerobacter</taxon>
    </lineage>
</organism>
<accession>B0KCX1</accession>
<name>YDJC_THEP3</name>
<reference key="1">
    <citation type="submission" date="2008-01" db="EMBL/GenBank/DDBJ databases">
        <title>Complete sequence of Thermoanaerobacter pseudethanolicus 39E.</title>
        <authorList>
            <person name="Copeland A."/>
            <person name="Lucas S."/>
            <person name="Lapidus A."/>
            <person name="Barry K."/>
            <person name="Glavina del Rio T."/>
            <person name="Dalin E."/>
            <person name="Tice H."/>
            <person name="Pitluck S."/>
            <person name="Bruce D."/>
            <person name="Goodwin L."/>
            <person name="Saunders E."/>
            <person name="Brettin T."/>
            <person name="Detter J.C."/>
            <person name="Han C."/>
            <person name="Schmutz J."/>
            <person name="Larimer F."/>
            <person name="Land M."/>
            <person name="Hauser L."/>
            <person name="Kyrpides N."/>
            <person name="Lykidis A."/>
            <person name="Hemme C."/>
            <person name="Fields M.W."/>
            <person name="He Z."/>
            <person name="Zhou J."/>
            <person name="Richardson P."/>
        </authorList>
    </citation>
    <scope>NUCLEOTIDE SEQUENCE [LARGE SCALE GENOMIC DNA]</scope>
    <source>
        <strain>ATCC 33223 / DSM 2355 / 39E</strain>
    </source>
</reference>
<keyword id="KW-0119">Carbohydrate metabolism</keyword>
<keyword id="KW-0378">Hydrolase</keyword>
<keyword id="KW-0460">Magnesium</keyword>
<keyword id="KW-0479">Metal-binding</keyword>
<keyword id="KW-1185">Reference proteome</keyword>
<evidence type="ECO:0000255" key="1">
    <source>
        <dbReference type="HAMAP-Rule" id="MF_01246"/>
    </source>
</evidence>
<protein>
    <recommendedName>
        <fullName evidence="1">Carbohydrate deacetylase</fullName>
        <ecNumber evidence="1">3.5.1.-</ecNumber>
    </recommendedName>
</protein>
<proteinExistence type="inferred from homology"/>
<feature type="chain" id="PRO_1000139838" description="Carbohydrate deacetylase">
    <location>
        <begin position="1"/>
        <end position="249"/>
    </location>
</feature>
<feature type="binding site" evidence="1">
    <location>
        <position position="60"/>
    </location>
    <ligand>
        <name>Mg(2+)</name>
        <dbReference type="ChEBI" id="CHEBI:18420"/>
    </ligand>
</feature>
<feature type="binding site" evidence="1">
    <location>
        <position position="125"/>
    </location>
    <ligand>
        <name>Mg(2+)</name>
        <dbReference type="ChEBI" id="CHEBI:18420"/>
    </ligand>
</feature>
<sequence length="249" mass="28159">MKYLIVNADDFGLTKGVNKGVVECYKNGILRSTSIMCNMPYANEALQVKELCPDLGFGIHITLDAGKPLSSPEKVNTLVDERGYFKRGFPHSLDDADVDQIRIEIEEQIKKAFSLGVTITHMDSHHHAQSHSKVIDAFIEMAHKYNLPVRSTPLDKEKIIKAGLKTVDNFIYTFYDDGVKKENLLSILGSLEEGTTEIMSHPAYVDDELVNISSYHAKREVERKILTDKDVLQFIRDNNILLTNYSILK</sequence>